<feature type="chain" id="PRO_0000200830" description="Uncharacterized protein y4eD">
    <location>
        <begin position="1"/>
        <end position="375"/>
    </location>
</feature>
<feature type="domain" description="GP-PDE">
    <location>
        <begin position="52"/>
        <end position="301"/>
    </location>
</feature>
<geneLocation type="plasmid">
    <name>sym pNGR234a</name>
</geneLocation>
<keyword id="KW-0614">Plasmid</keyword>
<keyword id="KW-1185">Reference proteome</keyword>
<reference key="1">
    <citation type="journal article" date="1997" name="Nature">
        <title>Molecular basis of symbiosis between Rhizobium and legumes.</title>
        <authorList>
            <person name="Freiberg C.A."/>
            <person name="Fellay R."/>
            <person name="Bairoch A."/>
            <person name="Broughton W.J."/>
            <person name="Rosenthal A."/>
            <person name="Perret X."/>
        </authorList>
    </citation>
    <scope>NUCLEOTIDE SEQUENCE [LARGE SCALE GENOMIC DNA]</scope>
    <source>
        <strain>NBRC 101917 / NGR234</strain>
    </source>
</reference>
<reference key="2">
    <citation type="journal article" date="2009" name="Appl. Environ. Microbiol.">
        <title>Rhizobium sp. strain NGR234 possesses a remarkable number of secretion systems.</title>
        <authorList>
            <person name="Schmeisser C."/>
            <person name="Liesegang H."/>
            <person name="Krysciak D."/>
            <person name="Bakkou N."/>
            <person name="Le Quere A."/>
            <person name="Wollherr A."/>
            <person name="Heinemeyer I."/>
            <person name="Morgenstern B."/>
            <person name="Pommerening-Roeser A."/>
            <person name="Flores M."/>
            <person name="Palacios R."/>
            <person name="Brenner S."/>
            <person name="Gottschalk G."/>
            <person name="Schmitz R.A."/>
            <person name="Broughton W.J."/>
            <person name="Perret X."/>
            <person name="Strittmatter A.W."/>
            <person name="Streit W.R."/>
        </authorList>
    </citation>
    <scope>NUCLEOTIDE SEQUENCE [LARGE SCALE GENOMIC DNA]</scope>
    <source>
        <strain>NBRC 101917 / NGR234</strain>
    </source>
</reference>
<organism>
    <name type="scientific">Sinorhizobium fredii (strain NBRC 101917 / NGR234)</name>
    <dbReference type="NCBI Taxonomy" id="394"/>
    <lineage>
        <taxon>Bacteria</taxon>
        <taxon>Pseudomonadati</taxon>
        <taxon>Pseudomonadota</taxon>
        <taxon>Alphaproteobacteria</taxon>
        <taxon>Hyphomicrobiales</taxon>
        <taxon>Rhizobiaceae</taxon>
        <taxon>Sinorhizobium/Ensifer group</taxon>
        <taxon>Sinorhizobium</taxon>
    </lineage>
</organism>
<sequence>MRVALISTSIFALCCSSNVRAEAVLPVNPSPYLVGAITRNMFRVPKPDQDLVLLSAHRGSWEVYPENSAYALQDAWNSQIEAVEVDARFTADKEVILSHDYRMERESTGTGFLYDQNYSQVQQADLRDRHGRVFKDSRGRNAKFMTFSAALDLLAQYVTDDGHGYVMIIDVKGAVDDQDPTDPIELTQRCLDILAAKKNPKLSKAVVFKLKAKDAVDIGTFLNRTTYDPNVMGGLIVVENPDDQNVKDSNYDPHEDTIYDQWNVAPFPVQFEMNQFYKGDGLQAYLDYVDQKQGFATYHESNYYPEGVANSAGKCCFEHNTDPRSVAHGGIVPDYRGEPEMAIVNRTNLITTDWPDVVADMLRQLGRRNTSKLSR</sequence>
<dbReference type="EMBL" id="U00090">
    <property type="protein sequence ID" value="AAB91649.1"/>
    <property type="molecule type" value="Genomic_DNA"/>
</dbReference>
<dbReference type="RefSeq" id="NP_443837.1">
    <property type="nucleotide sequence ID" value="NC_000914.2"/>
</dbReference>
<dbReference type="RefSeq" id="WP_010875401.1">
    <property type="nucleotide sequence ID" value="NC_000914.2"/>
</dbReference>
<dbReference type="SMR" id="P55427"/>
<dbReference type="KEGG" id="rhi:NGR_a03890"/>
<dbReference type="PATRIC" id="fig|394.7.peg.406"/>
<dbReference type="eggNOG" id="COG0584">
    <property type="taxonomic scope" value="Bacteria"/>
</dbReference>
<dbReference type="HOGENOM" id="CLU_828673_0_0_5"/>
<dbReference type="OrthoDB" id="9809317at2"/>
<dbReference type="Proteomes" id="UP000001054">
    <property type="component" value="Plasmid pNGR234a"/>
</dbReference>
<dbReference type="GO" id="GO:0005886">
    <property type="term" value="C:plasma membrane"/>
    <property type="evidence" value="ECO:0007669"/>
    <property type="project" value="TreeGrafter"/>
</dbReference>
<dbReference type="GO" id="GO:0008889">
    <property type="term" value="F:glycerophosphodiester phosphodiesterase activity"/>
    <property type="evidence" value="ECO:0007669"/>
    <property type="project" value="TreeGrafter"/>
</dbReference>
<dbReference type="GO" id="GO:0006580">
    <property type="term" value="P:ethanolamine metabolic process"/>
    <property type="evidence" value="ECO:0007669"/>
    <property type="project" value="TreeGrafter"/>
</dbReference>
<dbReference type="GO" id="GO:0070291">
    <property type="term" value="P:N-acylethanolamine metabolic process"/>
    <property type="evidence" value="ECO:0007669"/>
    <property type="project" value="TreeGrafter"/>
</dbReference>
<dbReference type="GO" id="GO:0006644">
    <property type="term" value="P:phospholipid metabolic process"/>
    <property type="evidence" value="ECO:0007669"/>
    <property type="project" value="TreeGrafter"/>
</dbReference>
<dbReference type="CDD" id="cd08566">
    <property type="entry name" value="GDPD_AtGDE_like"/>
    <property type="match status" value="1"/>
</dbReference>
<dbReference type="Gene3D" id="3.20.20.190">
    <property type="entry name" value="Phosphatidylinositol (PI) phosphodiesterase"/>
    <property type="match status" value="1"/>
</dbReference>
<dbReference type="InterPro" id="IPR030395">
    <property type="entry name" value="GP_PDE_dom"/>
</dbReference>
<dbReference type="InterPro" id="IPR017946">
    <property type="entry name" value="PLC-like_Pdiesterase_TIM-brl"/>
</dbReference>
<dbReference type="PANTHER" id="PTHR46320">
    <property type="entry name" value="GLYCEROPHOSPHODIESTER PHOSPHODIESTERASE 1"/>
    <property type="match status" value="1"/>
</dbReference>
<dbReference type="PANTHER" id="PTHR46320:SF1">
    <property type="entry name" value="GLYCEROPHOSPHODIESTER PHOSPHODIESTERASE 1"/>
    <property type="match status" value="1"/>
</dbReference>
<dbReference type="Pfam" id="PF03009">
    <property type="entry name" value="GDPD"/>
    <property type="match status" value="1"/>
</dbReference>
<dbReference type="SUPFAM" id="SSF51695">
    <property type="entry name" value="PLC-like phosphodiesterases"/>
    <property type="match status" value="1"/>
</dbReference>
<dbReference type="PROSITE" id="PS51704">
    <property type="entry name" value="GP_PDE"/>
    <property type="match status" value="1"/>
</dbReference>
<proteinExistence type="predicted"/>
<name>Y4ED_SINFN</name>
<accession>P55427</accession>
<gene>
    <name type="ordered locus">NGR_a03890</name>
    <name type="ORF">y4eD</name>
</gene>
<protein>
    <recommendedName>
        <fullName>Uncharacterized protein y4eD</fullName>
    </recommendedName>
</protein>